<dbReference type="EC" id="2.8.1.7" evidence="1"/>
<dbReference type="EMBL" id="CP001657">
    <property type="protein sequence ID" value="ACT14054.1"/>
    <property type="molecule type" value="Genomic_DNA"/>
</dbReference>
<dbReference type="RefSeq" id="WP_015841205.1">
    <property type="nucleotide sequence ID" value="NC_012917.1"/>
</dbReference>
<dbReference type="SMR" id="C6DBJ1"/>
<dbReference type="STRING" id="561230.PC1_3031"/>
<dbReference type="KEGG" id="pct:PC1_3031"/>
<dbReference type="eggNOG" id="COG1104">
    <property type="taxonomic scope" value="Bacteria"/>
</dbReference>
<dbReference type="HOGENOM" id="CLU_003433_0_2_6"/>
<dbReference type="OrthoDB" id="9808002at2"/>
<dbReference type="UniPathway" id="UPA00266"/>
<dbReference type="Proteomes" id="UP000002736">
    <property type="component" value="Chromosome"/>
</dbReference>
<dbReference type="GO" id="GO:1990221">
    <property type="term" value="C:L-cysteine desulfurase complex"/>
    <property type="evidence" value="ECO:0007669"/>
    <property type="project" value="UniProtKB-ARBA"/>
</dbReference>
<dbReference type="GO" id="GO:0051537">
    <property type="term" value="F:2 iron, 2 sulfur cluster binding"/>
    <property type="evidence" value="ECO:0007669"/>
    <property type="project" value="UniProtKB-UniRule"/>
</dbReference>
<dbReference type="GO" id="GO:0031071">
    <property type="term" value="F:cysteine desulfurase activity"/>
    <property type="evidence" value="ECO:0007669"/>
    <property type="project" value="UniProtKB-UniRule"/>
</dbReference>
<dbReference type="GO" id="GO:0046872">
    <property type="term" value="F:metal ion binding"/>
    <property type="evidence" value="ECO:0007669"/>
    <property type="project" value="UniProtKB-KW"/>
</dbReference>
<dbReference type="GO" id="GO:0030170">
    <property type="term" value="F:pyridoxal phosphate binding"/>
    <property type="evidence" value="ECO:0007669"/>
    <property type="project" value="UniProtKB-UniRule"/>
</dbReference>
<dbReference type="GO" id="GO:0044571">
    <property type="term" value="P:[2Fe-2S] cluster assembly"/>
    <property type="evidence" value="ECO:0007669"/>
    <property type="project" value="UniProtKB-UniRule"/>
</dbReference>
<dbReference type="FunFam" id="3.40.640.10:FF:000003">
    <property type="entry name" value="Cysteine desulfurase IscS"/>
    <property type="match status" value="1"/>
</dbReference>
<dbReference type="FunFam" id="3.90.1150.10:FF:000002">
    <property type="entry name" value="Cysteine desulfurase IscS"/>
    <property type="match status" value="1"/>
</dbReference>
<dbReference type="Gene3D" id="3.90.1150.10">
    <property type="entry name" value="Aspartate Aminotransferase, domain 1"/>
    <property type="match status" value="1"/>
</dbReference>
<dbReference type="Gene3D" id="3.40.640.10">
    <property type="entry name" value="Type I PLP-dependent aspartate aminotransferase-like (Major domain)"/>
    <property type="match status" value="1"/>
</dbReference>
<dbReference type="HAMAP" id="MF_00331">
    <property type="entry name" value="Cys_desulf_IscS"/>
    <property type="match status" value="1"/>
</dbReference>
<dbReference type="InterPro" id="IPR000192">
    <property type="entry name" value="Aminotrans_V_dom"/>
</dbReference>
<dbReference type="InterPro" id="IPR020578">
    <property type="entry name" value="Aminotrans_V_PyrdxlP_BS"/>
</dbReference>
<dbReference type="InterPro" id="IPR010240">
    <property type="entry name" value="Cys_deSase_IscS"/>
</dbReference>
<dbReference type="InterPro" id="IPR016454">
    <property type="entry name" value="Cysteine_dSase"/>
</dbReference>
<dbReference type="InterPro" id="IPR015424">
    <property type="entry name" value="PyrdxlP-dep_Trfase"/>
</dbReference>
<dbReference type="InterPro" id="IPR015421">
    <property type="entry name" value="PyrdxlP-dep_Trfase_major"/>
</dbReference>
<dbReference type="InterPro" id="IPR015422">
    <property type="entry name" value="PyrdxlP-dep_Trfase_small"/>
</dbReference>
<dbReference type="NCBIfam" id="TIGR02006">
    <property type="entry name" value="IscS"/>
    <property type="match status" value="1"/>
</dbReference>
<dbReference type="NCBIfam" id="NF002806">
    <property type="entry name" value="PRK02948.1"/>
    <property type="match status" value="1"/>
</dbReference>
<dbReference type="NCBIfam" id="NF010611">
    <property type="entry name" value="PRK14012.1"/>
    <property type="match status" value="1"/>
</dbReference>
<dbReference type="PANTHER" id="PTHR11601:SF34">
    <property type="entry name" value="CYSTEINE DESULFURASE"/>
    <property type="match status" value="1"/>
</dbReference>
<dbReference type="PANTHER" id="PTHR11601">
    <property type="entry name" value="CYSTEINE DESULFURYLASE FAMILY MEMBER"/>
    <property type="match status" value="1"/>
</dbReference>
<dbReference type="Pfam" id="PF00266">
    <property type="entry name" value="Aminotran_5"/>
    <property type="match status" value="1"/>
</dbReference>
<dbReference type="PIRSF" id="PIRSF005572">
    <property type="entry name" value="NifS"/>
    <property type="match status" value="1"/>
</dbReference>
<dbReference type="SUPFAM" id="SSF53383">
    <property type="entry name" value="PLP-dependent transferases"/>
    <property type="match status" value="1"/>
</dbReference>
<dbReference type="PROSITE" id="PS00595">
    <property type="entry name" value="AA_TRANSFER_CLASS_5"/>
    <property type="match status" value="1"/>
</dbReference>
<protein>
    <recommendedName>
        <fullName evidence="1">Cysteine desulfurase IscS</fullName>
        <ecNumber evidence="1">2.8.1.7</ecNumber>
    </recommendedName>
</protein>
<reference key="1">
    <citation type="submission" date="2009-07" db="EMBL/GenBank/DDBJ databases">
        <title>Complete sequence of Pectobacterium carotovorum subsp. carotovorum PC1.</title>
        <authorList>
            <consortium name="US DOE Joint Genome Institute"/>
            <person name="Lucas S."/>
            <person name="Copeland A."/>
            <person name="Lapidus A."/>
            <person name="Glavina del Rio T."/>
            <person name="Tice H."/>
            <person name="Bruce D."/>
            <person name="Goodwin L."/>
            <person name="Pitluck S."/>
            <person name="Munk A.C."/>
            <person name="Brettin T."/>
            <person name="Detter J.C."/>
            <person name="Han C."/>
            <person name="Tapia R."/>
            <person name="Larimer F."/>
            <person name="Land M."/>
            <person name="Hauser L."/>
            <person name="Kyrpides N."/>
            <person name="Mikhailova N."/>
            <person name="Balakrishnan V."/>
            <person name="Glasner J."/>
            <person name="Perna N.T."/>
        </authorList>
    </citation>
    <scope>NUCLEOTIDE SEQUENCE [LARGE SCALE GENOMIC DNA]</scope>
    <source>
        <strain>PC1</strain>
    </source>
</reference>
<organism>
    <name type="scientific">Pectobacterium carotovorum subsp. carotovorum (strain PC1)</name>
    <dbReference type="NCBI Taxonomy" id="561230"/>
    <lineage>
        <taxon>Bacteria</taxon>
        <taxon>Pseudomonadati</taxon>
        <taxon>Pseudomonadota</taxon>
        <taxon>Gammaproteobacteria</taxon>
        <taxon>Enterobacterales</taxon>
        <taxon>Pectobacteriaceae</taxon>
        <taxon>Pectobacterium</taxon>
    </lineage>
</organism>
<accession>C6DBJ1</accession>
<name>ISCS_PECCP</name>
<feature type="chain" id="PRO_1000205171" description="Cysteine desulfurase IscS">
    <location>
        <begin position="1"/>
        <end position="404"/>
    </location>
</feature>
<feature type="active site" description="Cysteine persulfide intermediate" evidence="1">
    <location>
        <position position="328"/>
    </location>
</feature>
<feature type="binding site" evidence="1">
    <location>
        <begin position="75"/>
        <end position="76"/>
    </location>
    <ligand>
        <name>pyridoxal 5'-phosphate</name>
        <dbReference type="ChEBI" id="CHEBI:597326"/>
    </ligand>
</feature>
<feature type="binding site" evidence="1">
    <location>
        <position position="155"/>
    </location>
    <ligand>
        <name>pyridoxal 5'-phosphate</name>
        <dbReference type="ChEBI" id="CHEBI:597326"/>
    </ligand>
</feature>
<feature type="binding site" evidence="1">
    <location>
        <position position="183"/>
    </location>
    <ligand>
        <name>pyridoxal 5'-phosphate</name>
        <dbReference type="ChEBI" id="CHEBI:597326"/>
    </ligand>
</feature>
<feature type="binding site" evidence="1">
    <location>
        <begin position="203"/>
        <end position="205"/>
    </location>
    <ligand>
        <name>pyridoxal 5'-phosphate</name>
        <dbReference type="ChEBI" id="CHEBI:597326"/>
    </ligand>
</feature>
<feature type="binding site" evidence="1">
    <location>
        <position position="243"/>
    </location>
    <ligand>
        <name>pyridoxal 5'-phosphate</name>
        <dbReference type="ChEBI" id="CHEBI:597326"/>
    </ligand>
</feature>
<feature type="binding site" description="via persulfide group" evidence="1">
    <location>
        <position position="328"/>
    </location>
    <ligand>
        <name>[2Fe-2S] cluster</name>
        <dbReference type="ChEBI" id="CHEBI:190135"/>
        <note>ligand shared with IscU</note>
    </ligand>
</feature>
<feature type="modified residue" description="N6-(pyridoxal phosphate)lysine" evidence="1">
    <location>
        <position position="206"/>
    </location>
</feature>
<evidence type="ECO:0000255" key="1">
    <source>
        <dbReference type="HAMAP-Rule" id="MF_00331"/>
    </source>
</evidence>
<proteinExistence type="inferred from homology"/>
<comment type="function">
    <text evidence="1">Master enzyme that delivers sulfur to a number of partners involved in Fe-S cluster assembly, tRNA modification or cofactor biosynthesis. Catalyzes the removal of elemental sulfur atoms from cysteine to produce alanine. Functions as a sulfur delivery protein for Fe-S cluster synthesis onto IscU, an Fe-S scaffold assembly protein, as well as other S acceptor proteins.</text>
</comment>
<comment type="catalytic activity">
    <reaction evidence="1">
        <text>(sulfur carrier)-H + L-cysteine = (sulfur carrier)-SH + L-alanine</text>
        <dbReference type="Rhea" id="RHEA:43892"/>
        <dbReference type="Rhea" id="RHEA-COMP:14737"/>
        <dbReference type="Rhea" id="RHEA-COMP:14739"/>
        <dbReference type="ChEBI" id="CHEBI:29917"/>
        <dbReference type="ChEBI" id="CHEBI:35235"/>
        <dbReference type="ChEBI" id="CHEBI:57972"/>
        <dbReference type="ChEBI" id="CHEBI:64428"/>
        <dbReference type="EC" id="2.8.1.7"/>
    </reaction>
</comment>
<comment type="cofactor">
    <cofactor evidence="1">
        <name>pyridoxal 5'-phosphate</name>
        <dbReference type="ChEBI" id="CHEBI:597326"/>
    </cofactor>
</comment>
<comment type="pathway">
    <text evidence="1">Cofactor biosynthesis; iron-sulfur cluster biosynthesis.</text>
</comment>
<comment type="subunit">
    <text evidence="1">Homodimer. Forms a heterotetramer with IscU, interacts with other sulfur acceptors.</text>
</comment>
<comment type="subcellular location">
    <subcellularLocation>
        <location evidence="1">Cytoplasm</location>
    </subcellularLocation>
</comment>
<comment type="similarity">
    <text evidence="1">Belongs to the class-V pyridoxal-phosphate-dependent aminotransferase family. NifS/IscS subfamily.</text>
</comment>
<sequence length="404" mass="45134">MKLPIYLDYSATTPVDPRVAEKMMQFLTLDGTFGNPASRSHRFGWQAEEAVDIARNQIAELVGADPREIVFTSGATEADNLAIKGVANFYQKKGKHIITSKTEHKAVLDTCRQLEREGFEVTYLAPQRNGIIDLAELEAAMREDTILVSIMHVNNEIGVVQDIETIGEMCRSRGIVFHVDATQSVGKLPIDLNQLKVDLMSFSGHKIYGPKGIGALYVRRKPRIRLEAQMHGGGHERGMRSGTLPVHQIVGMGEAYRIAKEEMTAEMDRLRTLRDRLWNGINDIEEVYLNGDIEQGAPNILNVSFNYVEGESLIMALKDLAVSSGSACTSASLEPSYVLRALGMNDELAHSSIRFSLGRFTTEEEIDYTIELVRKSIGRLRDLSPLWEMFKQGVDISSIEWAHH</sequence>
<keyword id="KW-0001">2Fe-2S</keyword>
<keyword id="KW-0963">Cytoplasm</keyword>
<keyword id="KW-0408">Iron</keyword>
<keyword id="KW-0411">Iron-sulfur</keyword>
<keyword id="KW-0479">Metal-binding</keyword>
<keyword id="KW-0663">Pyridoxal phosphate</keyword>
<keyword id="KW-0808">Transferase</keyword>
<gene>
    <name evidence="1" type="primary">iscS</name>
    <name type="ordered locus">PC1_3031</name>
</gene>